<evidence type="ECO:0000255" key="1">
    <source>
        <dbReference type="HAMAP-Rule" id="MF_01232"/>
    </source>
</evidence>
<evidence type="ECO:0000256" key="2">
    <source>
        <dbReference type="SAM" id="MobiDB-lite"/>
    </source>
</evidence>
<comment type="similarity">
    <text evidence="1">Belongs to the UPF0229 family.</text>
</comment>
<protein>
    <recommendedName>
        <fullName evidence="1">UPF0229 protein YeaH</fullName>
    </recommendedName>
</protein>
<sequence length="427" mass="49497">MTWFIDRRLNGKNKSMVNRQRFLRRYKAQIKQSISEAINKRSVTDVDSGESVSIPTEDISEPMFHQGRGGLRHRVHPGNDHFVQSDRIERPQGGGGGSGSGQGQASQDGEGQDEFVFQISKDEYLDLLFEDLALPNLKRNQQRQLTEYKTHRAGYTANGVPANISVVRSLQNSLARRTAMTAGKRRELHALEETLQIISNSEPAQLLEEERLRKEIAELREKISRVPFIDTFDLRYKNYEKRPDPSSQAVMFCLMDVSGSMDQSTKDMAKRFYILLYLFLSRTYKNVEVVYIRHHTQAKEVDEHEFFYSQETGGTIVSSALKLMDEVVQARYDPAQWNIYAAQASDGDNWADDSPLCHEILAKKLLPVVRYYSYIEITRRAHQTLWREYEHLQSTFENFAMQHIRDQDDIYPVFRELFHKQNATVKD</sequence>
<reference key="1">
    <citation type="journal article" date="2009" name="PLoS Genet.">
        <title>Organised genome dynamics in the Escherichia coli species results in highly diverse adaptive paths.</title>
        <authorList>
            <person name="Touchon M."/>
            <person name="Hoede C."/>
            <person name="Tenaillon O."/>
            <person name="Barbe V."/>
            <person name="Baeriswyl S."/>
            <person name="Bidet P."/>
            <person name="Bingen E."/>
            <person name="Bonacorsi S."/>
            <person name="Bouchier C."/>
            <person name="Bouvet O."/>
            <person name="Calteau A."/>
            <person name="Chiapello H."/>
            <person name="Clermont O."/>
            <person name="Cruveiller S."/>
            <person name="Danchin A."/>
            <person name="Diard M."/>
            <person name="Dossat C."/>
            <person name="Karoui M.E."/>
            <person name="Frapy E."/>
            <person name="Garry L."/>
            <person name="Ghigo J.M."/>
            <person name="Gilles A.M."/>
            <person name="Johnson J."/>
            <person name="Le Bouguenec C."/>
            <person name="Lescat M."/>
            <person name="Mangenot S."/>
            <person name="Martinez-Jehanne V."/>
            <person name="Matic I."/>
            <person name="Nassif X."/>
            <person name="Oztas S."/>
            <person name="Petit M.A."/>
            <person name="Pichon C."/>
            <person name="Rouy Z."/>
            <person name="Ruf C.S."/>
            <person name="Schneider D."/>
            <person name="Tourret J."/>
            <person name="Vacherie B."/>
            <person name="Vallenet D."/>
            <person name="Medigue C."/>
            <person name="Rocha E.P.C."/>
            <person name="Denamur E."/>
        </authorList>
    </citation>
    <scope>NUCLEOTIDE SEQUENCE [LARGE SCALE GENOMIC DNA]</scope>
    <source>
        <strain>ATCC 35469 / DSM 13698 / BCRC 15582 / CCUG 18766 / IAM 14443 / JCM 21226 / LMG 7866 / NBRC 102419 / NCTC 12128 / CDC 0568-73</strain>
    </source>
</reference>
<dbReference type="EMBL" id="CU928158">
    <property type="protein sequence ID" value="CAQ89321.1"/>
    <property type="molecule type" value="Genomic_DNA"/>
</dbReference>
<dbReference type="RefSeq" id="WP_000219701.1">
    <property type="nucleotide sequence ID" value="NC_011740.1"/>
</dbReference>
<dbReference type="SMR" id="B7LSN5"/>
<dbReference type="GeneID" id="75057158"/>
<dbReference type="KEGG" id="efe:EFER_1806"/>
<dbReference type="HOGENOM" id="CLU_049702_0_0_6"/>
<dbReference type="OrthoDB" id="9788289at2"/>
<dbReference type="Proteomes" id="UP000000745">
    <property type="component" value="Chromosome"/>
</dbReference>
<dbReference type="HAMAP" id="MF_01232">
    <property type="entry name" value="UPF0229"/>
    <property type="match status" value="1"/>
</dbReference>
<dbReference type="InterPro" id="IPR006698">
    <property type="entry name" value="UPF0229"/>
</dbReference>
<dbReference type="NCBIfam" id="NF003707">
    <property type="entry name" value="PRK05325.1-2"/>
    <property type="match status" value="1"/>
</dbReference>
<dbReference type="NCBIfam" id="NF003708">
    <property type="entry name" value="PRK05325.1-3"/>
    <property type="match status" value="1"/>
</dbReference>
<dbReference type="PANTHER" id="PTHR30510">
    <property type="entry name" value="UPF0229 PROTEIN YEAH"/>
    <property type="match status" value="1"/>
</dbReference>
<dbReference type="PANTHER" id="PTHR30510:SF2">
    <property type="entry name" value="UPF0229 PROTEIN YEAH"/>
    <property type="match status" value="1"/>
</dbReference>
<dbReference type="Pfam" id="PF04285">
    <property type="entry name" value="DUF444"/>
    <property type="match status" value="1"/>
</dbReference>
<name>YEAH_ESCF3</name>
<gene>
    <name evidence="1" type="primary">yeaH</name>
    <name type="ordered locus">EFER_1806</name>
</gene>
<organism>
    <name type="scientific">Escherichia fergusonii (strain ATCC 35469 / DSM 13698 / CCUG 18766 / IAM 14443 / JCM 21226 / LMG 7866 / NBRC 102419 / NCTC 12128 / CDC 0568-73)</name>
    <dbReference type="NCBI Taxonomy" id="585054"/>
    <lineage>
        <taxon>Bacteria</taxon>
        <taxon>Pseudomonadati</taxon>
        <taxon>Pseudomonadota</taxon>
        <taxon>Gammaproteobacteria</taxon>
        <taxon>Enterobacterales</taxon>
        <taxon>Enterobacteriaceae</taxon>
        <taxon>Escherichia</taxon>
    </lineage>
</organism>
<proteinExistence type="inferred from homology"/>
<feature type="chain" id="PRO_1000139648" description="UPF0229 protein YeaH">
    <location>
        <begin position="1"/>
        <end position="427"/>
    </location>
</feature>
<feature type="region of interest" description="Disordered" evidence="2">
    <location>
        <begin position="84"/>
        <end position="110"/>
    </location>
</feature>
<feature type="compositionally biased region" description="Gly residues" evidence="2">
    <location>
        <begin position="92"/>
        <end position="102"/>
    </location>
</feature>
<accession>B7LSN5</accession>